<accession>P19582</accession>
<accession>O32122</accession>
<accession>P70991</accession>
<reference key="1">
    <citation type="journal article" date="1988" name="J. Biol. Chem.">
        <title>Cloning and nucleotide sequence of the Bacillus subtilis hom gene coding for homoserine dehydrogenase. Structural and evolutionary relationships with Escherichia coli aspartokinases-homoserine dehydrogenases I and II.</title>
        <authorList>
            <person name="Parsot C."/>
            <person name="Cohen G.N."/>
        </authorList>
    </citation>
    <scope>NUCLEOTIDE SEQUENCE [GENOMIC DNA]</scope>
    <scope>CATALYTIC ACTIVITY</scope>
    <scope>ACTIVITY REGULATION</scope>
    <scope>PATHWAY</scope>
    <source>
        <strain>168</strain>
    </source>
</reference>
<reference key="2">
    <citation type="journal article" date="1997" name="Nature">
        <title>The complete genome sequence of the Gram-positive bacterium Bacillus subtilis.</title>
        <authorList>
            <person name="Kunst F."/>
            <person name="Ogasawara N."/>
            <person name="Moszer I."/>
            <person name="Albertini A.M."/>
            <person name="Alloni G."/>
            <person name="Azevedo V."/>
            <person name="Bertero M.G."/>
            <person name="Bessieres P."/>
            <person name="Bolotin A."/>
            <person name="Borchert S."/>
            <person name="Borriss R."/>
            <person name="Boursier L."/>
            <person name="Brans A."/>
            <person name="Braun M."/>
            <person name="Brignell S.C."/>
            <person name="Bron S."/>
            <person name="Brouillet S."/>
            <person name="Bruschi C.V."/>
            <person name="Caldwell B."/>
            <person name="Capuano V."/>
            <person name="Carter N.M."/>
            <person name="Choi S.-K."/>
            <person name="Codani J.-J."/>
            <person name="Connerton I.F."/>
            <person name="Cummings N.J."/>
            <person name="Daniel R.A."/>
            <person name="Denizot F."/>
            <person name="Devine K.M."/>
            <person name="Duesterhoeft A."/>
            <person name="Ehrlich S.D."/>
            <person name="Emmerson P.T."/>
            <person name="Entian K.-D."/>
            <person name="Errington J."/>
            <person name="Fabret C."/>
            <person name="Ferrari E."/>
            <person name="Foulger D."/>
            <person name="Fritz C."/>
            <person name="Fujita M."/>
            <person name="Fujita Y."/>
            <person name="Fuma S."/>
            <person name="Galizzi A."/>
            <person name="Galleron N."/>
            <person name="Ghim S.-Y."/>
            <person name="Glaser P."/>
            <person name="Goffeau A."/>
            <person name="Golightly E.J."/>
            <person name="Grandi G."/>
            <person name="Guiseppi G."/>
            <person name="Guy B.J."/>
            <person name="Haga K."/>
            <person name="Haiech J."/>
            <person name="Harwood C.R."/>
            <person name="Henaut A."/>
            <person name="Hilbert H."/>
            <person name="Holsappel S."/>
            <person name="Hosono S."/>
            <person name="Hullo M.-F."/>
            <person name="Itaya M."/>
            <person name="Jones L.-M."/>
            <person name="Joris B."/>
            <person name="Karamata D."/>
            <person name="Kasahara Y."/>
            <person name="Klaerr-Blanchard M."/>
            <person name="Klein C."/>
            <person name="Kobayashi Y."/>
            <person name="Koetter P."/>
            <person name="Koningstein G."/>
            <person name="Krogh S."/>
            <person name="Kumano M."/>
            <person name="Kurita K."/>
            <person name="Lapidus A."/>
            <person name="Lardinois S."/>
            <person name="Lauber J."/>
            <person name="Lazarevic V."/>
            <person name="Lee S.-M."/>
            <person name="Levine A."/>
            <person name="Liu H."/>
            <person name="Masuda S."/>
            <person name="Mauel C."/>
            <person name="Medigue C."/>
            <person name="Medina N."/>
            <person name="Mellado R.P."/>
            <person name="Mizuno M."/>
            <person name="Moestl D."/>
            <person name="Nakai S."/>
            <person name="Noback M."/>
            <person name="Noone D."/>
            <person name="O'Reilly M."/>
            <person name="Ogawa K."/>
            <person name="Ogiwara A."/>
            <person name="Oudega B."/>
            <person name="Park S.-H."/>
            <person name="Parro V."/>
            <person name="Pohl T.M."/>
            <person name="Portetelle D."/>
            <person name="Porwollik S."/>
            <person name="Prescott A.M."/>
            <person name="Presecan E."/>
            <person name="Pujic P."/>
            <person name="Purnelle B."/>
            <person name="Rapoport G."/>
            <person name="Rey M."/>
            <person name="Reynolds S."/>
            <person name="Rieger M."/>
            <person name="Rivolta C."/>
            <person name="Rocha E."/>
            <person name="Roche B."/>
            <person name="Rose M."/>
            <person name="Sadaie Y."/>
            <person name="Sato T."/>
            <person name="Scanlan E."/>
            <person name="Schleich S."/>
            <person name="Schroeter R."/>
            <person name="Scoffone F."/>
            <person name="Sekiguchi J."/>
            <person name="Sekowska A."/>
            <person name="Seror S.J."/>
            <person name="Serror P."/>
            <person name="Shin B.-S."/>
            <person name="Soldo B."/>
            <person name="Sorokin A."/>
            <person name="Tacconi E."/>
            <person name="Takagi T."/>
            <person name="Takahashi H."/>
            <person name="Takemaru K."/>
            <person name="Takeuchi M."/>
            <person name="Tamakoshi A."/>
            <person name="Tanaka T."/>
            <person name="Terpstra P."/>
            <person name="Tognoni A."/>
            <person name="Tosato V."/>
            <person name="Uchiyama S."/>
            <person name="Vandenbol M."/>
            <person name="Vannier F."/>
            <person name="Vassarotti A."/>
            <person name="Viari A."/>
            <person name="Wambutt R."/>
            <person name="Wedler E."/>
            <person name="Wedler H."/>
            <person name="Weitzenegger T."/>
            <person name="Winters P."/>
            <person name="Wipat A."/>
            <person name="Yamamoto H."/>
            <person name="Yamane K."/>
            <person name="Yasumoto K."/>
            <person name="Yata K."/>
            <person name="Yoshida K."/>
            <person name="Yoshikawa H.-F."/>
            <person name="Zumstein E."/>
            <person name="Yoshikawa H."/>
            <person name="Danchin A."/>
        </authorList>
    </citation>
    <scope>NUCLEOTIDE SEQUENCE [LARGE SCALE GENOMIC DNA]</scope>
    <source>
        <strain>168</strain>
    </source>
</reference>
<reference key="3">
    <citation type="journal article" date="1986" name="EMBO J.">
        <title>Evolution of biosynthetic pathways: a common ancestor for threonine synthase, threonine dehydratase and D-serine dehydratase.</title>
        <authorList>
            <person name="Parsot C."/>
        </authorList>
    </citation>
    <scope>NUCLEOTIDE SEQUENCE [GENOMIC DNA] OF 353-433</scope>
    <source>
        <strain>168</strain>
    </source>
</reference>
<reference key="4">
    <citation type="journal article" date="2011" name="J. Bacteriol.">
        <title>Nonclassical protein secretion by Bacillus subtilis in the stationary phase is not due to cell lysis.</title>
        <authorList>
            <person name="Yang C.K."/>
            <person name="Ewis H.E."/>
            <person name="Zhang X."/>
            <person name="Lu C.D."/>
            <person name="Hu H.J."/>
            <person name="Pan Y."/>
            <person name="Abdelal A.T."/>
            <person name="Tai P.C."/>
        </authorList>
    </citation>
    <scope>PROTEIN SEQUENCE OF N-TERMINUS</scope>
    <scope>SUBCELLULAR LOCATION</scope>
    <source>
        <strain>168 / WB600BHM</strain>
    </source>
</reference>
<reference key="5">
    <citation type="journal article" date="2020" name="J. Microbiol. Biotechnol.">
        <title>Molecular and Enzymatic Features of Homoserine Dehydrogenase from Bacillus subtilis.</title>
        <authorList>
            <person name="Kim D.H."/>
            <person name="Nguyen Q.T."/>
            <person name="Ko G.S."/>
            <person name="Yang J.K."/>
        </authorList>
    </citation>
    <scope>FUNCTION</scope>
    <scope>CATALYTIC ACTIVITY</scope>
    <scope>ACTIVITY REGULATION</scope>
    <scope>SUBUNIT</scope>
</reference>
<organism>
    <name type="scientific">Bacillus subtilis (strain 168)</name>
    <dbReference type="NCBI Taxonomy" id="224308"/>
    <lineage>
        <taxon>Bacteria</taxon>
        <taxon>Bacillati</taxon>
        <taxon>Bacillota</taxon>
        <taxon>Bacilli</taxon>
        <taxon>Bacillales</taxon>
        <taxon>Bacillaceae</taxon>
        <taxon>Bacillus</taxon>
    </lineage>
</organism>
<proteinExistence type="evidence at protein level"/>
<gene>
    <name type="primary">hom</name>
    <name type="synonym">tdm</name>
    <name type="ordered locus">BSU32260</name>
</gene>
<keyword id="KW-0028">Amino-acid biosynthesis</keyword>
<keyword id="KW-0963">Cytoplasm</keyword>
<keyword id="KW-0903">Direct protein sequencing</keyword>
<keyword id="KW-0479">Metal-binding</keyword>
<keyword id="KW-0486">Methionine biosynthesis</keyword>
<keyword id="KW-0520">NAD</keyword>
<keyword id="KW-0521">NADP</keyword>
<keyword id="KW-0560">Oxidoreductase</keyword>
<keyword id="KW-1185">Reference proteome</keyword>
<keyword id="KW-0964">Secreted</keyword>
<keyword id="KW-0915">Sodium</keyword>
<keyword id="KW-0791">Threonine biosynthesis</keyword>
<sequence>MKAIRVGLLGLGTVGSGVVKIIQDHQDKLMHQVGCPVTIKKVLVKDLEKKREVDLPKEVLTTEVYDVIDDPDVDVVIEVIGGVEQTKQYLVDALRSKKHVVTANKDLMAVYGSELLAEAKENGCDIYFEASVAGGIPILRTLEEGLSSDRITKMMGIVNGTTNFILTKMIKEKSPYEEVLKEAQDLGFAEADPTSDVEGLDAARKMAILARLGFSMNVDLEDVKVKGISQITDEDISFSKRLGYTMKLIGIAQRDGSKIEVSVQPTLLPDHHPLSAVHNEFNAVYVYGEAVGETMFYGPGAGSMPTATSVVSDLVAVMKNMRLGVTGNSFVGPQYEKNMKSPSDIYAQQFLRIHVKDEVGSFSKITSVFSERGVSFEKILQLPIKGHDELAEIVIVTHHTSEADFSDILQNLNDLEVVQEVKSTYRVEGNGWS</sequence>
<dbReference type="EC" id="1.1.1.3" evidence="3"/>
<dbReference type="EMBL" id="M23217">
    <property type="protein sequence ID" value="AAA50609.1"/>
    <property type="molecule type" value="Genomic_DNA"/>
</dbReference>
<dbReference type="EMBL" id="AL009126">
    <property type="protein sequence ID" value="CAB15216.1"/>
    <property type="molecule type" value="Genomic_DNA"/>
</dbReference>
<dbReference type="EMBL" id="X04603">
    <property type="protein sequence ID" value="CAA28269.1"/>
    <property type="molecule type" value="Genomic_DNA"/>
</dbReference>
<dbReference type="PIR" id="A31973">
    <property type="entry name" value="DEECHS"/>
</dbReference>
<dbReference type="RefSeq" id="NP_391106.1">
    <property type="nucleotide sequence ID" value="NC_000964.3"/>
</dbReference>
<dbReference type="RefSeq" id="WP_003228694.1">
    <property type="nucleotide sequence ID" value="NZ_OZ025638.1"/>
</dbReference>
<dbReference type="SMR" id="P19582"/>
<dbReference type="FunCoup" id="P19582">
    <property type="interactions" value="594"/>
</dbReference>
<dbReference type="IntAct" id="P19582">
    <property type="interactions" value="4"/>
</dbReference>
<dbReference type="STRING" id="224308.BSU32260"/>
<dbReference type="PaxDb" id="224308-BSU32260"/>
<dbReference type="EnsemblBacteria" id="CAB15216">
    <property type="protein sequence ID" value="CAB15216"/>
    <property type="gene ID" value="BSU_32260"/>
</dbReference>
<dbReference type="GeneID" id="936654"/>
<dbReference type="KEGG" id="bsu:BSU32260"/>
<dbReference type="PATRIC" id="fig|224308.179.peg.3492"/>
<dbReference type="eggNOG" id="COG0460">
    <property type="taxonomic scope" value="Bacteria"/>
</dbReference>
<dbReference type="InParanoid" id="P19582"/>
<dbReference type="OrthoDB" id="9808167at2"/>
<dbReference type="PhylomeDB" id="P19582"/>
<dbReference type="BioCyc" id="BSUB:BSU32260-MONOMER"/>
<dbReference type="BRENDA" id="1.1.1.3">
    <property type="organism ID" value="658"/>
</dbReference>
<dbReference type="UniPathway" id="UPA00050">
    <property type="reaction ID" value="UER00063"/>
</dbReference>
<dbReference type="UniPathway" id="UPA00051">
    <property type="reaction ID" value="UER00465"/>
</dbReference>
<dbReference type="PRO" id="PR:P19582"/>
<dbReference type="Proteomes" id="UP000001570">
    <property type="component" value="Chromosome"/>
</dbReference>
<dbReference type="GO" id="GO:0005737">
    <property type="term" value="C:cytoplasm"/>
    <property type="evidence" value="ECO:0007669"/>
    <property type="project" value="UniProtKB-SubCell"/>
</dbReference>
<dbReference type="GO" id="GO:0005576">
    <property type="term" value="C:extracellular region"/>
    <property type="evidence" value="ECO:0007669"/>
    <property type="project" value="UniProtKB-SubCell"/>
</dbReference>
<dbReference type="GO" id="GO:0004412">
    <property type="term" value="F:homoserine dehydrogenase activity"/>
    <property type="evidence" value="ECO:0000250"/>
    <property type="project" value="UniProtKB"/>
</dbReference>
<dbReference type="GO" id="GO:0046872">
    <property type="term" value="F:metal ion binding"/>
    <property type="evidence" value="ECO:0007669"/>
    <property type="project" value="UniProtKB-KW"/>
</dbReference>
<dbReference type="GO" id="GO:0070403">
    <property type="term" value="F:NAD+ binding"/>
    <property type="evidence" value="ECO:0000250"/>
    <property type="project" value="UniProtKB"/>
</dbReference>
<dbReference type="GO" id="GO:0050661">
    <property type="term" value="F:NADP binding"/>
    <property type="evidence" value="ECO:0007669"/>
    <property type="project" value="InterPro"/>
</dbReference>
<dbReference type="GO" id="GO:0009086">
    <property type="term" value="P:methionine biosynthetic process"/>
    <property type="evidence" value="ECO:0000250"/>
    <property type="project" value="UniProtKB"/>
</dbReference>
<dbReference type="GO" id="GO:0009088">
    <property type="term" value="P:threonine biosynthetic process"/>
    <property type="evidence" value="ECO:0000250"/>
    <property type="project" value="UniProtKB"/>
</dbReference>
<dbReference type="CDD" id="cd04881">
    <property type="entry name" value="ACT_HSDH-Hom"/>
    <property type="match status" value="1"/>
</dbReference>
<dbReference type="FunFam" id="3.30.360.10:FF:000005">
    <property type="entry name" value="Homoserine dehydrogenase"/>
    <property type="match status" value="1"/>
</dbReference>
<dbReference type="FunFam" id="3.40.50.720:FF:000062">
    <property type="entry name" value="Homoserine dehydrogenase"/>
    <property type="match status" value="1"/>
</dbReference>
<dbReference type="Gene3D" id="3.30.70.260">
    <property type="match status" value="1"/>
</dbReference>
<dbReference type="Gene3D" id="3.30.360.10">
    <property type="entry name" value="Dihydrodipicolinate Reductase, domain 2"/>
    <property type="match status" value="1"/>
</dbReference>
<dbReference type="Gene3D" id="3.40.50.720">
    <property type="entry name" value="NAD(P)-binding Rossmann-like Domain"/>
    <property type="match status" value="1"/>
</dbReference>
<dbReference type="InterPro" id="IPR045865">
    <property type="entry name" value="ACT-like_dom_sf"/>
</dbReference>
<dbReference type="InterPro" id="IPR002912">
    <property type="entry name" value="ACT_dom"/>
</dbReference>
<dbReference type="InterPro" id="IPR005106">
    <property type="entry name" value="Asp/hSer_DH_NAD-bd"/>
</dbReference>
<dbReference type="InterPro" id="IPR016204">
    <property type="entry name" value="HDH"/>
</dbReference>
<dbReference type="InterPro" id="IPR001342">
    <property type="entry name" value="HDH_cat"/>
</dbReference>
<dbReference type="InterPro" id="IPR019811">
    <property type="entry name" value="HDH_CS"/>
</dbReference>
<dbReference type="InterPro" id="IPR036291">
    <property type="entry name" value="NAD(P)-bd_dom_sf"/>
</dbReference>
<dbReference type="NCBIfam" id="NF004976">
    <property type="entry name" value="PRK06349.1"/>
    <property type="match status" value="1"/>
</dbReference>
<dbReference type="PANTHER" id="PTHR43331">
    <property type="entry name" value="HOMOSERINE DEHYDROGENASE"/>
    <property type="match status" value="1"/>
</dbReference>
<dbReference type="PANTHER" id="PTHR43331:SF1">
    <property type="entry name" value="HOMOSERINE DEHYDROGENASE"/>
    <property type="match status" value="1"/>
</dbReference>
<dbReference type="Pfam" id="PF01842">
    <property type="entry name" value="ACT"/>
    <property type="match status" value="1"/>
</dbReference>
<dbReference type="Pfam" id="PF00742">
    <property type="entry name" value="Homoserine_dh"/>
    <property type="match status" value="1"/>
</dbReference>
<dbReference type="Pfam" id="PF03447">
    <property type="entry name" value="NAD_binding_3"/>
    <property type="match status" value="1"/>
</dbReference>
<dbReference type="PIRSF" id="PIRSF000098">
    <property type="entry name" value="Homoser_dehydrog"/>
    <property type="match status" value="1"/>
</dbReference>
<dbReference type="SUPFAM" id="SSF55021">
    <property type="entry name" value="ACT-like"/>
    <property type="match status" value="1"/>
</dbReference>
<dbReference type="SUPFAM" id="SSF55347">
    <property type="entry name" value="Glyceraldehyde-3-phosphate dehydrogenase-like, C-terminal domain"/>
    <property type="match status" value="1"/>
</dbReference>
<dbReference type="SUPFAM" id="SSF51735">
    <property type="entry name" value="NAD(P)-binding Rossmann-fold domains"/>
    <property type="match status" value="1"/>
</dbReference>
<dbReference type="PROSITE" id="PS51671">
    <property type="entry name" value="ACT"/>
    <property type="match status" value="1"/>
</dbReference>
<dbReference type="PROSITE" id="PS01042">
    <property type="entry name" value="HOMOSER_DHGENASE"/>
    <property type="match status" value="1"/>
</dbReference>
<name>DHOM_BACSU</name>
<feature type="chain" id="PRO_0000066692" description="Homoserine dehydrogenase">
    <location>
        <begin position="1"/>
        <end position="433"/>
    </location>
</feature>
<feature type="domain" description="ACT" evidence="5">
    <location>
        <begin position="350"/>
        <end position="426"/>
    </location>
</feature>
<feature type="active site" description="Proton donor" evidence="4">
    <location>
        <position position="205"/>
    </location>
</feature>
<feature type="binding site" evidence="2">
    <location>
        <position position="13"/>
    </location>
    <ligand>
        <name>NADPH</name>
        <dbReference type="ChEBI" id="CHEBI:57783"/>
    </ligand>
</feature>
<feature type="binding site" evidence="3">
    <location>
        <position position="14"/>
    </location>
    <ligand>
        <name>NAD(+)</name>
        <dbReference type="ChEBI" id="CHEBI:57540"/>
    </ligand>
</feature>
<feature type="binding site" evidence="1">
    <location>
        <position position="14"/>
    </location>
    <ligand>
        <name>NADP(+)</name>
        <dbReference type="ChEBI" id="CHEBI:58349"/>
    </ligand>
</feature>
<feature type="binding site" evidence="2">
    <location>
        <position position="14"/>
    </location>
    <ligand>
        <name>NADPH</name>
        <dbReference type="ChEBI" id="CHEBI:57783"/>
    </ligand>
</feature>
<feature type="binding site" evidence="3">
    <location>
        <position position="33"/>
    </location>
    <ligand>
        <name>NAD(+)</name>
        <dbReference type="ChEBI" id="CHEBI:57540"/>
    </ligand>
</feature>
<feature type="binding site" evidence="1">
    <location>
        <position position="45"/>
    </location>
    <ligand>
        <name>NADP(+)</name>
        <dbReference type="ChEBI" id="CHEBI:58349"/>
    </ligand>
</feature>
<feature type="binding site" evidence="2">
    <location>
        <position position="45"/>
    </location>
    <ligand>
        <name>NADPH</name>
        <dbReference type="ChEBI" id="CHEBI:57783"/>
    </ligand>
</feature>
<feature type="binding site" evidence="1">
    <location>
        <position position="105"/>
    </location>
    <ligand>
        <name>NADP(+)</name>
        <dbReference type="ChEBI" id="CHEBI:58349"/>
    </ligand>
</feature>
<feature type="binding site" evidence="2">
    <location>
        <position position="105"/>
    </location>
    <ligand>
        <name>NADPH</name>
        <dbReference type="ChEBI" id="CHEBI:57783"/>
    </ligand>
</feature>
<feature type="binding site" evidence="3">
    <location>
        <position position="129"/>
    </location>
    <ligand>
        <name>Na(+)</name>
        <dbReference type="ChEBI" id="CHEBI:29101"/>
    </ligand>
</feature>
<feature type="binding site" evidence="3">
    <location>
        <position position="132"/>
    </location>
    <ligand>
        <name>Na(+)</name>
        <dbReference type="ChEBI" id="CHEBI:29101"/>
    </ligand>
</feature>
<feature type="binding site" evidence="3">
    <location>
        <position position="134"/>
    </location>
    <ligand>
        <name>Na(+)</name>
        <dbReference type="ChEBI" id="CHEBI:29101"/>
    </ligand>
</feature>
<feature type="binding site" evidence="3">
    <location>
        <position position="136"/>
    </location>
    <ligand>
        <name>Na(+)</name>
        <dbReference type="ChEBI" id="CHEBI:29101"/>
    </ligand>
</feature>
<feature type="binding site" evidence="1">
    <location>
        <position position="187"/>
    </location>
    <ligand>
        <name>NADP(+)</name>
        <dbReference type="ChEBI" id="CHEBI:58349"/>
    </ligand>
</feature>
<feature type="binding site" evidence="3">
    <location>
        <position position="190"/>
    </location>
    <ligand>
        <name>L-homoserine</name>
        <dbReference type="ChEBI" id="CHEBI:57476"/>
    </ligand>
</feature>
<feature type="binding site" evidence="1">
    <location>
        <position position="190"/>
    </location>
    <ligand>
        <name>NADP(+)</name>
        <dbReference type="ChEBI" id="CHEBI:58349"/>
    </ligand>
</feature>
<feature type="binding site" evidence="3">
    <location>
        <position position="201"/>
    </location>
    <ligand>
        <name>L-homoserine</name>
        <dbReference type="ChEBI" id="CHEBI:57476"/>
    </ligand>
</feature>
<feature type="binding site" evidence="3">
    <location>
        <position position="302"/>
    </location>
    <ligand>
        <name>NAD(+)</name>
        <dbReference type="ChEBI" id="CHEBI:57540"/>
    </ligand>
</feature>
<feature type="binding site" evidence="1">
    <location>
        <position position="302"/>
    </location>
    <ligand>
        <name>NADP(+)</name>
        <dbReference type="ChEBI" id="CHEBI:58349"/>
    </ligand>
</feature>
<feature type="binding site" evidence="2">
    <location>
        <position position="302"/>
    </location>
    <ligand>
        <name>NADPH</name>
        <dbReference type="ChEBI" id="CHEBI:57783"/>
    </ligand>
</feature>
<feature type="sequence conflict" description="In Ref. 3; CAA28269." evidence="9" ref="3">
    <original>S</original>
    <variation>T</variation>
    <location>
        <position position="375"/>
    </location>
</feature>
<feature type="sequence conflict" description="In Ref. 1; AAA50609." evidence="9" ref="1">
    <original>E</original>
    <variation>Q</variation>
    <location>
        <position position="402"/>
    </location>
</feature>
<protein>
    <recommendedName>
        <fullName>Homoserine dehydrogenase</fullName>
        <shortName>HDH</shortName>
        <shortName>HSD</shortName>
        <ecNumber evidence="3">1.1.1.3</ecNumber>
    </recommendedName>
</protein>
<comment type="function">
    <text evidence="8">Catalyzes the conversion of L-aspartate-beta-semialdehyde (L-Asa) to L-homoserine (L-Hse), the third step in the biosynthesis of threonine and methionine from aspartate (PubMed:33046675). Utilizes NADPH but not NADH as coenzyme (PubMed:33046675).</text>
</comment>
<comment type="catalytic activity">
    <reaction evidence="8">
        <text>L-homoserine + NADP(+) = L-aspartate 4-semialdehyde + NADPH + H(+)</text>
        <dbReference type="Rhea" id="RHEA:15761"/>
        <dbReference type="ChEBI" id="CHEBI:15378"/>
        <dbReference type="ChEBI" id="CHEBI:57476"/>
        <dbReference type="ChEBI" id="CHEBI:57783"/>
        <dbReference type="ChEBI" id="CHEBI:58349"/>
        <dbReference type="ChEBI" id="CHEBI:537519"/>
        <dbReference type="EC" id="1.1.1.3"/>
    </reaction>
    <physiologicalReaction direction="right-to-left" evidence="3 10">
        <dbReference type="Rhea" id="RHEA:15763"/>
    </physiologicalReaction>
</comment>
<comment type="cofactor">
    <cofactor evidence="3">
        <name>a metal cation</name>
        <dbReference type="ChEBI" id="CHEBI:25213"/>
    </cofactor>
    <text evidence="3">A sodium ion is seen in the structure; a metal ion may subtly affect the relative position of the nucleotide-binding region to influence enzyme activity, and could increase the stability of the enzyme.</text>
</comment>
<comment type="activity regulation">
    <text evidence="7 8">Feedback inhibition by threonine (PubMed:3139660). Activated by sodium ions (PubMed:33046675).</text>
</comment>
<comment type="biophysicochemical properties">
    <kinetics>
        <KM evidence="8">35 mM for L-homoserine (at pH 9 and at 25 degrees Celsius)</KM>
        <KM evidence="8">0.39 mM for NADP+ (at pH 9 and at 25 degrees Celsius)</KM>
    </kinetics>
    <phDependence>
        <text evidence="8">Optimum pH is 9 for the reverse direction.</text>
    </phDependence>
    <temperatureDependence>
        <text evidence="8">Optimum temperature is 35 degrees Celsius.</text>
    </temperatureDependence>
</comment>
<comment type="pathway">
    <text evidence="3">Amino-acid biosynthesis; L-methionine biosynthesis via de novo pathway; L-homoserine from L-aspartate: step 3/3.</text>
</comment>
<comment type="pathway">
    <text evidence="3">Amino-acid biosynthesis; L-threonine biosynthesis; L-threonine from L-aspartate: step 3/5.</text>
</comment>
<comment type="subunit">
    <text evidence="8">Homotetramer.</text>
</comment>
<comment type="subcellular location">
    <subcellularLocation>
        <location evidence="6">Cytoplasm</location>
    </subcellularLocation>
    <subcellularLocation>
        <location evidence="6">Secreted</location>
    </subcellularLocation>
    <text evidence="6">Present in the cytoplasm early in growth, as cells become stationary protein also accumulates in the medium; secreted protein is not processed (PubMed:21856851).</text>
</comment>
<comment type="similarity">
    <text evidence="9">Belongs to the homoserine dehydrogenase family.</text>
</comment>
<evidence type="ECO:0000250" key="1">
    <source>
        <dbReference type="UniProtKB" id="F9VNG5"/>
    </source>
</evidence>
<evidence type="ECO:0000250" key="2">
    <source>
        <dbReference type="UniProtKB" id="O58802"/>
    </source>
</evidence>
<evidence type="ECO:0000250" key="3">
    <source>
        <dbReference type="UniProtKB" id="P31116"/>
    </source>
</evidence>
<evidence type="ECO:0000255" key="4"/>
<evidence type="ECO:0000255" key="5">
    <source>
        <dbReference type="PROSITE-ProRule" id="PRU01007"/>
    </source>
</evidence>
<evidence type="ECO:0000269" key="6">
    <source>
    </source>
</evidence>
<evidence type="ECO:0000269" key="7">
    <source>
    </source>
</evidence>
<evidence type="ECO:0000269" key="8">
    <source>
    </source>
</evidence>
<evidence type="ECO:0000305" key="9"/>
<evidence type="ECO:0000305" key="10">
    <source>
    </source>
</evidence>